<organism>
    <name type="scientific">Arabidopsis thaliana</name>
    <name type="common">Mouse-ear cress</name>
    <dbReference type="NCBI Taxonomy" id="3702"/>
    <lineage>
        <taxon>Eukaryota</taxon>
        <taxon>Viridiplantae</taxon>
        <taxon>Streptophyta</taxon>
        <taxon>Embryophyta</taxon>
        <taxon>Tracheophyta</taxon>
        <taxon>Spermatophyta</taxon>
        <taxon>Magnoliopsida</taxon>
        <taxon>eudicotyledons</taxon>
        <taxon>Gunneridae</taxon>
        <taxon>Pentapetalae</taxon>
        <taxon>rosids</taxon>
        <taxon>malvids</taxon>
        <taxon>Brassicales</taxon>
        <taxon>Brassicaceae</taxon>
        <taxon>Camelineae</taxon>
        <taxon>Arabidopsis</taxon>
    </lineage>
</organism>
<dbReference type="EC" id="1.8.3.2" evidence="2 3"/>
<dbReference type="EMBL" id="AJ551263">
    <property type="protein sequence ID" value="CAD83013.1"/>
    <property type="molecule type" value="mRNA"/>
</dbReference>
<dbReference type="EMBL" id="AC079674">
    <property type="protein sequence ID" value="AAG51780.1"/>
    <property type="status" value="ALT_SEQ"/>
    <property type="molecule type" value="Genomic_DNA"/>
</dbReference>
<dbReference type="EMBL" id="CP002684">
    <property type="protein sequence ID" value="AEE32487.1"/>
    <property type="molecule type" value="Genomic_DNA"/>
</dbReference>
<dbReference type="EMBL" id="AK117991">
    <property type="protein sequence ID" value="BAC42626.1"/>
    <property type="molecule type" value="mRNA"/>
</dbReference>
<dbReference type="EMBL" id="BT003718">
    <property type="protein sequence ID" value="AAO39946.1"/>
    <property type="molecule type" value="mRNA"/>
</dbReference>
<dbReference type="EMBL" id="AY086861">
    <property type="protein sequence ID" value="AAM63908.1"/>
    <property type="molecule type" value="mRNA"/>
</dbReference>
<dbReference type="PIR" id="G96535">
    <property type="entry name" value="G96535"/>
</dbReference>
<dbReference type="RefSeq" id="NP_564557.1">
    <property type="nucleotide sequence ID" value="NM_103875.4"/>
</dbReference>
<dbReference type="PDB" id="2HJ3">
    <property type="method" value="X-ray"/>
    <property type="resolution" value="2.50 A"/>
    <property type="chains" value="A/B=71-191"/>
</dbReference>
<dbReference type="PDBsum" id="2HJ3"/>
<dbReference type="SMR" id="Q8GXX0"/>
<dbReference type="BioGRID" id="26636">
    <property type="interactions" value="1"/>
</dbReference>
<dbReference type="FunCoup" id="Q8GXX0">
    <property type="interactions" value="1797"/>
</dbReference>
<dbReference type="STRING" id="3702.Q8GXX0"/>
<dbReference type="PaxDb" id="3702-AT1G49880.1"/>
<dbReference type="ProteomicsDB" id="220643"/>
<dbReference type="EnsemblPlants" id="AT1G49880.1">
    <property type="protein sequence ID" value="AT1G49880.1"/>
    <property type="gene ID" value="AT1G49880"/>
</dbReference>
<dbReference type="GeneID" id="841411"/>
<dbReference type="Gramene" id="AT1G49880.1">
    <property type="protein sequence ID" value="AT1G49880.1"/>
    <property type="gene ID" value="AT1G49880"/>
</dbReference>
<dbReference type="KEGG" id="ath:AT1G49880"/>
<dbReference type="Araport" id="AT1G49880"/>
<dbReference type="TAIR" id="AT1G49880">
    <property type="gene designation" value="ERV1"/>
</dbReference>
<dbReference type="eggNOG" id="KOG3355">
    <property type="taxonomic scope" value="Eukaryota"/>
</dbReference>
<dbReference type="HOGENOM" id="CLU_105631_0_0_1"/>
<dbReference type="InParanoid" id="Q8GXX0"/>
<dbReference type="OMA" id="GNIDIMP"/>
<dbReference type="PhylomeDB" id="Q8GXX0"/>
<dbReference type="BioCyc" id="ARA:AT1G49880-MONOMER"/>
<dbReference type="BRENDA" id="1.8.3.2">
    <property type="organism ID" value="399"/>
</dbReference>
<dbReference type="EvolutionaryTrace" id="Q8GXX0"/>
<dbReference type="PRO" id="PR:Q8GXX0"/>
<dbReference type="Proteomes" id="UP000006548">
    <property type="component" value="Chromosome 1"/>
</dbReference>
<dbReference type="ExpressionAtlas" id="Q8GXX0">
    <property type="expression patterns" value="baseline and differential"/>
</dbReference>
<dbReference type="GO" id="GO:0005739">
    <property type="term" value="C:mitochondrion"/>
    <property type="evidence" value="ECO:0000314"/>
    <property type="project" value="UniProtKB"/>
</dbReference>
<dbReference type="GO" id="GO:0050660">
    <property type="term" value="F:flavin adenine dinucleotide binding"/>
    <property type="evidence" value="ECO:0000314"/>
    <property type="project" value="UniProtKB"/>
</dbReference>
<dbReference type="GO" id="GO:0016971">
    <property type="term" value="F:flavin-dependent sulfhydryl oxidase activity"/>
    <property type="evidence" value="ECO:0007669"/>
    <property type="project" value="InterPro"/>
</dbReference>
<dbReference type="GO" id="GO:0042802">
    <property type="term" value="F:identical protein binding"/>
    <property type="evidence" value="ECO:0000353"/>
    <property type="project" value="UniProtKB"/>
</dbReference>
<dbReference type="GO" id="GO:0016972">
    <property type="term" value="F:thiol oxidase activity"/>
    <property type="evidence" value="ECO:0000314"/>
    <property type="project" value="UniProtKB"/>
</dbReference>
<dbReference type="DisProt" id="DP02648"/>
<dbReference type="FunFam" id="1.20.120.310:FF:000002">
    <property type="entry name" value="Sulfhydryl oxidase"/>
    <property type="match status" value="1"/>
</dbReference>
<dbReference type="Gene3D" id="1.20.120.310">
    <property type="entry name" value="ERV/ALR sulfhydryl oxidase domain"/>
    <property type="match status" value="1"/>
</dbReference>
<dbReference type="InterPro" id="IPR039799">
    <property type="entry name" value="ALR/ERV"/>
</dbReference>
<dbReference type="InterPro" id="IPR036774">
    <property type="entry name" value="ERV/ALR_sulphydryl_oxid_sf"/>
</dbReference>
<dbReference type="InterPro" id="IPR017905">
    <property type="entry name" value="ERV/ALR_sulphydryl_oxidase"/>
</dbReference>
<dbReference type="PANTHER" id="PTHR12645">
    <property type="entry name" value="ALR/ERV"/>
    <property type="match status" value="1"/>
</dbReference>
<dbReference type="PANTHER" id="PTHR12645:SF0">
    <property type="entry name" value="FAD-LINKED SULFHYDRYL OXIDASE ALR"/>
    <property type="match status" value="1"/>
</dbReference>
<dbReference type="Pfam" id="PF04777">
    <property type="entry name" value="Evr1_Alr"/>
    <property type="match status" value="1"/>
</dbReference>
<dbReference type="SUPFAM" id="SSF69000">
    <property type="entry name" value="FAD-dependent thiol oxidase"/>
    <property type="match status" value="1"/>
</dbReference>
<dbReference type="PROSITE" id="PS51324">
    <property type="entry name" value="ERV_ALR"/>
    <property type="match status" value="1"/>
</dbReference>
<reference key="1">
    <citation type="journal article" date="2004" name="J. Biol. Chem.">
        <title>Unique features of plant mitochondrial sulfhydryl oxidase.</title>
        <authorList>
            <person name="Levitan A."/>
            <person name="Danon A."/>
            <person name="Lisowsky T."/>
        </authorList>
    </citation>
    <scope>NUCLEOTIDE SEQUENCE [MRNA]</scope>
    <scope>FUNCTION</scope>
    <scope>COFACTOR</scope>
    <scope>SUBUNIT</scope>
    <scope>SUBCELLULAR LOCATION</scope>
    <scope>CATALYTIC ACTIVITY</scope>
</reference>
<reference key="2">
    <citation type="journal article" date="2000" name="Nature">
        <title>Sequence and analysis of chromosome 1 of the plant Arabidopsis thaliana.</title>
        <authorList>
            <person name="Theologis A."/>
            <person name="Ecker J.R."/>
            <person name="Palm C.J."/>
            <person name="Federspiel N.A."/>
            <person name="Kaul S."/>
            <person name="White O."/>
            <person name="Alonso J."/>
            <person name="Altafi H."/>
            <person name="Araujo R."/>
            <person name="Bowman C.L."/>
            <person name="Brooks S.Y."/>
            <person name="Buehler E."/>
            <person name="Chan A."/>
            <person name="Chao Q."/>
            <person name="Chen H."/>
            <person name="Cheuk R.F."/>
            <person name="Chin C.W."/>
            <person name="Chung M.K."/>
            <person name="Conn L."/>
            <person name="Conway A.B."/>
            <person name="Conway A.R."/>
            <person name="Creasy T.H."/>
            <person name="Dewar K."/>
            <person name="Dunn P."/>
            <person name="Etgu P."/>
            <person name="Feldblyum T.V."/>
            <person name="Feng J.-D."/>
            <person name="Fong B."/>
            <person name="Fujii C.Y."/>
            <person name="Gill J.E."/>
            <person name="Goldsmith A.D."/>
            <person name="Haas B."/>
            <person name="Hansen N.F."/>
            <person name="Hughes B."/>
            <person name="Huizar L."/>
            <person name="Hunter J.L."/>
            <person name="Jenkins J."/>
            <person name="Johnson-Hopson C."/>
            <person name="Khan S."/>
            <person name="Khaykin E."/>
            <person name="Kim C.J."/>
            <person name="Koo H.L."/>
            <person name="Kremenetskaia I."/>
            <person name="Kurtz D.B."/>
            <person name="Kwan A."/>
            <person name="Lam B."/>
            <person name="Langin-Hooper S."/>
            <person name="Lee A."/>
            <person name="Lee J.M."/>
            <person name="Lenz C.A."/>
            <person name="Li J.H."/>
            <person name="Li Y.-P."/>
            <person name="Lin X."/>
            <person name="Liu S.X."/>
            <person name="Liu Z.A."/>
            <person name="Luros J.S."/>
            <person name="Maiti R."/>
            <person name="Marziali A."/>
            <person name="Militscher J."/>
            <person name="Miranda M."/>
            <person name="Nguyen M."/>
            <person name="Nierman W.C."/>
            <person name="Osborne B.I."/>
            <person name="Pai G."/>
            <person name="Peterson J."/>
            <person name="Pham P.K."/>
            <person name="Rizzo M."/>
            <person name="Rooney T."/>
            <person name="Rowley D."/>
            <person name="Sakano H."/>
            <person name="Salzberg S.L."/>
            <person name="Schwartz J.R."/>
            <person name="Shinn P."/>
            <person name="Southwick A.M."/>
            <person name="Sun H."/>
            <person name="Tallon L.J."/>
            <person name="Tambunga G."/>
            <person name="Toriumi M.J."/>
            <person name="Town C.D."/>
            <person name="Utterback T."/>
            <person name="Van Aken S."/>
            <person name="Vaysberg M."/>
            <person name="Vysotskaia V.S."/>
            <person name="Walker M."/>
            <person name="Wu D."/>
            <person name="Yu G."/>
            <person name="Fraser C.M."/>
            <person name="Venter J.C."/>
            <person name="Davis R.W."/>
        </authorList>
    </citation>
    <scope>NUCLEOTIDE SEQUENCE [LARGE SCALE GENOMIC DNA]</scope>
    <source>
        <strain>cv. Columbia</strain>
    </source>
</reference>
<reference key="3">
    <citation type="journal article" date="2017" name="Plant J.">
        <title>Araport11: a complete reannotation of the Arabidopsis thaliana reference genome.</title>
        <authorList>
            <person name="Cheng C.Y."/>
            <person name="Krishnakumar V."/>
            <person name="Chan A.P."/>
            <person name="Thibaud-Nissen F."/>
            <person name="Schobel S."/>
            <person name="Town C.D."/>
        </authorList>
    </citation>
    <scope>GENOME REANNOTATION</scope>
    <source>
        <strain>cv. Columbia</strain>
    </source>
</reference>
<reference key="4">
    <citation type="journal article" date="2002" name="Science">
        <title>Functional annotation of a full-length Arabidopsis cDNA collection.</title>
        <authorList>
            <person name="Seki M."/>
            <person name="Narusaka M."/>
            <person name="Kamiya A."/>
            <person name="Ishida J."/>
            <person name="Satou M."/>
            <person name="Sakurai T."/>
            <person name="Nakajima M."/>
            <person name="Enju A."/>
            <person name="Akiyama K."/>
            <person name="Oono Y."/>
            <person name="Muramatsu M."/>
            <person name="Hayashizaki Y."/>
            <person name="Kawai J."/>
            <person name="Carninci P."/>
            <person name="Itoh M."/>
            <person name="Ishii Y."/>
            <person name="Arakawa T."/>
            <person name="Shibata K."/>
            <person name="Shinagawa A."/>
            <person name="Shinozaki K."/>
        </authorList>
    </citation>
    <scope>NUCLEOTIDE SEQUENCE [LARGE SCALE MRNA]</scope>
    <source>
        <strain>cv. Columbia</strain>
    </source>
</reference>
<reference key="5">
    <citation type="journal article" date="2003" name="Science">
        <title>Empirical analysis of transcriptional activity in the Arabidopsis genome.</title>
        <authorList>
            <person name="Yamada K."/>
            <person name="Lim J."/>
            <person name="Dale J.M."/>
            <person name="Chen H."/>
            <person name="Shinn P."/>
            <person name="Palm C.J."/>
            <person name="Southwick A.M."/>
            <person name="Wu H.C."/>
            <person name="Kim C.J."/>
            <person name="Nguyen M."/>
            <person name="Pham P.K."/>
            <person name="Cheuk R.F."/>
            <person name="Karlin-Newmann G."/>
            <person name="Liu S.X."/>
            <person name="Lam B."/>
            <person name="Sakano H."/>
            <person name="Wu T."/>
            <person name="Yu G."/>
            <person name="Miranda M."/>
            <person name="Quach H.L."/>
            <person name="Tripp M."/>
            <person name="Chang C.H."/>
            <person name="Lee J.M."/>
            <person name="Toriumi M.J."/>
            <person name="Chan M.M."/>
            <person name="Tang C.C."/>
            <person name="Onodera C.S."/>
            <person name="Deng J.M."/>
            <person name="Akiyama K."/>
            <person name="Ansari Y."/>
            <person name="Arakawa T."/>
            <person name="Banh J."/>
            <person name="Banno F."/>
            <person name="Bowser L."/>
            <person name="Brooks S.Y."/>
            <person name="Carninci P."/>
            <person name="Chao Q."/>
            <person name="Choy N."/>
            <person name="Enju A."/>
            <person name="Goldsmith A.D."/>
            <person name="Gurjal M."/>
            <person name="Hansen N.F."/>
            <person name="Hayashizaki Y."/>
            <person name="Johnson-Hopson C."/>
            <person name="Hsuan V.W."/>
            <person name="Iida K."/>
            <person name="Karnes M."/>
            <person name="Khan S."/>
            <person name="Koesema E."/>
            <person name="Ishida J."/>
            <person name="Jiang P.X."/>
            <person name="Jones T."/>
            <person name="Kawai J."/>
            <person name="Kamiya A."/>
            <person name="Meyers C."/>
            <person name="Nakajima M."/>
            <person name="Narusaka M."/>
            <person name="Seki M."/>
            <person name="Sakurai T."/>
            <person name="Satou M."/>
            <person name="Tamse R."/>
            <person name="Vaysberg M."/>
            <person name="Wallender E.K."/>
            <person name="Wong C."/>
            <person name="Yamamura Y."/>
            <person name="Yuan S."/>
            <person name="Shinozaki K."/>
            <person name="Davis R.W."/>
            <person name="Theologis A."/>
            <person name="Ecker J.R."/>
        </authorList>
    </citation>
    <scope>NUCLEOTIDE SEQUENCE [LARGE SCALE MRNA]</scope>
    <source>
        <strain>cv. Columbia</strain>
    </source>
</reference>
<reference key="6">
    <citation type="submission" date="2002-03" db="EMBL/GenBank/DDBJ databases">
        <title>Full-length cDNA from Arabidopsis thaliana.</title>
        <authorList>
            <person name="Brover V.V."/>
            <person name="Troukhan M.E."/>
            <person name="Alexandrov N.A."/>
            <person name="Lu Y.-P."/>
            <person name="Flavell R.B."/>
            <person name="Feldmann K.A."/>
        </authorList>
    </citation>
    <scope>NUCLEOTIDE SEQUENCE [LARGE SCALE MRNA]</scope>
</reference>
<reference key="7">
    <citation type="journal article" date="2010" name="J. Biol. Chem.">
        <title>Conserved and novel functions for Arabidopsis thaliana MIA40 in assembly of proteins in mitochondria and peroxisomes.</title>
        <authorList>
            <person name="Carrie C."/>
            <person name="Giraud E."/>
            <person name="Duncan O."/>
            <person name="Xu L."/>
            <person name="Wang Y."/>
            <person name="Huang S."/>
            <person name="Clifton R."/>
            <person name="Murcha M."/>
            <person name="Filipovska A."/>
            <person name="Rackham O."/>
            <person name="Vrielink A."/>
            <person name="Whelan J."/>
        </authorList>
    </citation>
    <scope>DISRUPTION PHENOTYPE</scope>
</reference>
<reference key="8">
    <citation type="journal article" date="2009" name="J. Biol. Chem.">
        <title>Electron transfer reactivity of the Arabidopsis thaliana sulfhydryl oxidase AtErv1.</title>
        <authorList>
            <person name="Farver O."/>
            <person name="Vitu E."/>
            <person name="Wherland S."/>
            <person name="Fass D."/>
            <person name="Pecht I."/>
        </authorList>
    </citation>
    <scope>DISULFIDE BONDS</scope>
</reference>
<reference key="9">
    <citation type="journal article" date="2006" name="J. Mol. Biol.">
        <title>Gain of function in an ERV/ALR sulfhydryl oxidase by molecular engineering of the shuttle disulfide.</title>
        <authorList>
            <person name="Vitu E."/>
            <person name="Bentzur M."/>
            <person name="Lisowsky T."/>
            <person name="Kaiser C.A."/>
            <person name="Fass D."/>
        </authorList>
    </citation>
    <scope>X-RAY CRYSTALLOGRAPHY (2.50 ANGSTROMS) OF 71-191 IN COMPLEX WITH FAD</scope>
    <scope>SUBUNIT</scope>
    <scope>DISULFIDE BONDS</scope>
    <scope>MUTAGENESIS OF CYS-177 AND CYS-182</scope>
    <scope>FUNCTION</scope>
    <scope>CATALYTIC ACTIVITY</scope>
</reference>
<reference key="10">
    <citation type="journal article" date="2017" name="BMC Biol.">
        <title>Erv1 of Arabidopsis thaliana can directly oxidize mitochondrial intermembrane space proteins in the absence of redox-active Mia40.</title>
        <authorList>
            <person name="Peleh V."/>
            <person name="Zannini F."/>
            <person name="Backes S."/>
            <person name="Rouhier N."/>
            <person name="Herrmann J.M."/>
        </authorList>
    </citation>
    <scope>FUNCTION</scope>
</reference>
<reference key="11">
    <citation type="journal article" date="2023" name="Antioxidants">
        <title>Oxidation of Arabidopsis thaliana COX19 using the combined action of ERV1 and glutathione.</title>
        <authorList>
            <person name="Zannini F."/>
            <person name="Herrmann J.M."/>
            <person name="Couturier J."/>
            <person name="Rouhier N."/>
        </authorList>
    </citation>
    <scope>FUNCTION</scope>
</reference>
<accession>Q8GXX0</accession>
<accession>Q8LC15</accession>
<accession>Q9C6C6</accession>
<proteinExistence type="evidence at protein level"/>
<feature type="chain" id="PRO_0000401377" description="FAD-linked sulfhydryl oxidase ERV1">
    <location>
        <begin position="1"/>
        <end position="191"/>
    </location>
</feature>
<feature type="domain" description="ERV/ALR sulfhydryl oxidase" evidence="1">
    <location>
        <begin position="72"/>
        <end position="172"/>
    </location>
</feature>
<feature type="short sequence motif" description="Required for dimerization and substrate specificity">
    <location>
        <begin position="177"/>
        <end position="182"/>
    </location>
</feature>
<feature type="binding site" evidence="3 10">
    <location>
        <position position="76"/>
    </location>
    <ligand>
        <name>FAD</name>
        <dbReference type="ChEBI" id="CHEBI:57692"/>
    </ligand>
</feature>
<feature type="binding site" evidence="3 10">
    <location>
        <position position="81"/>
    </location>
    <ligand>
        <name>FAD</name>
        <dbReference type="ChEBI" id="CHEBI:57692"/>
    </ligand>
</feature>
<feature type="binding site" evidence="3 10">
    <location>
        <position position="84"/>
    </location>
    <ligand>
        <name>FAD</name>
        <dbReference type="ChEBI" id="CHEBI:57692"/>
    </ligand>
</feature>
<feature type="binding site" evidence="3 10">
    <location>
        <position position="121"/>
    </location>
    <ligand>
        <name>FAD</name>
        <dbReference type="ChEBI" id="CHEBI:57692"/>
    </ligand>
</feature>
<feature type="binding site" evidence="3 10">
    <location>
        <position position="125"/>
    </location>
    <ligand>
        <name>FAD</name>
        <dbReference type="ChEBI" id="CHEBI:57692"/>
    </ligand>
</feature>
<feature type="binding site" evidence="3 10">
    <location>
        <position position="148"/>
    </location>
    <ligand>
        <name>FAD</name>
        <dbReference type="ChEBI" id="CHEBI:57692"/>
    </ligand>
</feature>
<feature type="binding site" evidence="3 10">
    <location>
        <position position="151"/>
    </location>
    <ligand>
        <name>FAD</name>
        <dbReference type="ChEBI" id="CHEBI:57692"/>
    </ligand>
</feature>
<feature type="binding site" evidence="3 10">
    <location>
        <position position="152"/>
    </location>
    <ligand>
        <name>FAD</name>
        <dbReference type="ChEBI" id="CHEBI:57692"/>
    </ligand>
</feature>
<feature type="binding site" evidence="3 10">
    <location>
        <position position="155"/>
    </location>
    <ligand>
        <name>FAD</name>
        <dbReference type="ChEBI" id="CHEBI:57692"/>
    </ligand>
</feature>
<feature type="binding site" evidence="3 10">
    <location>
        <position position="160"/>
    </location>
    <ligand>
        <name>FAD</name>
        <dbReference type="ChEBI" id="CHEBI:57692"/>
    </ligand>
</feature>
<feature type="binding site" evidence="3 10">
    <location>
        <position position="171"/>
    </location>
    <ligand>
        <name>FAD</name>
        <dbReference type="ChEBI" id="CHEBI:57692"/>
    </ligand>
</feature>
<feature type="disulfide bond" description="Redox-active" evidence="1 4">
    <location>
        <begin position="119"/>
        <end position="122"/>
    </location>
</feature>
<feature type="disulfide bond" evidence="1 3 4">
    <location>
        <begin position="148"/>
        <end position="165"/>
    </location>
</feature>
<feature type="disulfide bond" evidence="3 4">
    <location>
        <begin position="177"/>
        <end position="182"/>
    </location>
</feature>
<feature type="mutagenesis site" description="Loss the capacity to oxidize thioredoxin; when associated with A-182." evidence="3">
    <original>C</original>
    <variation>A</variation>
    <location>
        <position position="177"/>
    </location>
</feature>
<feature type="mutagenesis site" description="Loss the capacity to oxidize thioredoxin; when associated with A-177." evidence="3">
    <original>C</original>
    <variation>A</variation>
    <location>
        <position position="182"/>
    </location>
</feature>
<feature type="sequence conflict" description="In Ref. 6; AAM63908." evidence="7" ref="6">
    <original>PS</original>
    <variation>R</variation>
    <location>
        <begin position="35"/>
        <end position="36"/>
    </location>
</feature>
<feature type="helix" evidence="11">
    <location>
        <begin position="76"/>
        <end position="93"/>
    </location>
</feature>
<feature type="helix" evidence="11">
    <location>
        <begin position="100"/>
        <end position="116"/>
    </location>
</feature>
<feature type="helix" evidence="11">
    <location>
        <begin position="120"/>
        <end position="132"/>
    </location>
</feature>
<feature type="helix" evidence="11">
    <location>
        <begin position="140"/>
        <end position="157"/>
    </location>
</feature>
<feature type="helix" evidence="11">
    <location>
        <begin position="168"/>
        <end position="171"/>
    </location>
</feature>
<gene>
    <name type="primary">ERV1</name>
    <name type="ordered locus">At1g49880</name>
    <name type="ORF">F10F5.3</name>
</gene>
<comment type="function">
    <text evidence="5 6 8 9">FAD-dependent sulfhydryl oxidase that catalyzes disulfide bond formation (PubMed:14996837, PubMed:16893552). Oxidizes thioredoxin in vitro (PubMed:14996837, PubMed:16893552). Required for the import and folding of small cysteine-containing proteins in the mitochondrial intermembrane space, and can act independently of the oxidoreductase MIA40 (PubMed:29117860, PubMed:38001802). Can oxidize the cytochrome c oxidase assembly protein COX19, a typical substrate of MIA40 (PubMed:38001802).</text>
</comment>
<comment type="catalytic activity">
    <reaction evidence="2 3">
        <text>2 R'C(R)SH + O2 = R'C(R)S-S(R)CR' + H2O2</text>
        <dbReference type="Rhea" id="RHEA:17357"/>
        <dbReference type="ChEBI" id="CHEBI:15379"/>
        <dbReference type="ChEBI" id="CHEBI:16240"/>
        <dbReference type="ChEBI" id="CHEBI:16520"/>
        <dbReference type="ChEBI" id="CHEBI:17412"/>
        <dbReference type="EC" id="1.8.3.2"/>
    </reaction>
    <physiologicalReaction direction="left-to-right" evidence="8 9">
        <dbReference type="Rhea" id="RHEA:17358"/>
    </physiologicalReaction>
</comment>
<comment type="cofactor">
    <cofactor evidence="1 2">
        <name>FAD</name>
        <dbReference type="ChEBI" id="CHEBI:57692"/>
    </cofactor>
</comment>
<comment type="subunit">
    <text evidence="2 3">Homodimer.</text>
</comment>
<comment type="subcellular location">
    <subcellularLocation>
        <location evidence="2">Mitochondrion</location>
    </subcellularLocation>
</comment>
<comment type="PTM">
    <text evidence="4">Contains three disulfide bonds; one catalytic disulfide (Cys-119 to Cys-122), one structural disulfide (Cys-148 to Cys-165), and one shuttle disulfide (Cys-177 to Cys-182).</text>
</comment>
<comment type="disruption phenotype">
    <text evidence="3">Embryonic lethality when homozygous.</text>
</comment>
<comment type="sequence caution" evidence="7">
    <conflict type="erroneous gene model prediction">
        <sequence resource="EMBL-CDS" id="AAG51780"/>
    </conflict>
</comment>
<sequence length="191" mass="21600">MGEKPWQPLLQSFEKLSNCVQTHLSNFIGIKNTPPSSQSTIQNPIISLDSSPPIATNSSSLQKLPLKDKSTGPVTKEDLGRATWTFLHTLAAQYPEKPTRQQKKDVKELMTILSRMYPCRECADHFKEILRSNPAQAGSQEEFSQWLCHVHNTVNRSLGKLVFPCERVDARWGKLECEQKSCDLHGTSMDF</sequence>
<keyword id="KW-0002">3D-structure</keyword>
<keyword id="KW-1015">Disulfide bond</keyword>
<keyword id="KW-0274">FAD</keyword>
<keyword id="KW-0285">Flavoprotein</keyword>
<keyword id="KW-0496">Mitochondrion</keyword>
<keyword id="KW-0560">Oxidoreductase</keyword>
<keyword id="KW-1185">Reference proteome</keyword>
<name>ERV1_ARATH</name>
<protein>
    <recommendedName>
        <fullName>FAD-linked sulfhydryl oxidase ERV1</fullName>
        <shortName>AtErv1</shortName>
        <ecNumber evidence="2 3">1.8.3.2</ecNumber>
    </recommendedName>
    <alternativeName>
        <fullName>Mitochondrial sulfhydryl oxidase ERV1</fullName>
    </alternativeName>
</protein>
<evidence type="ECO:0000255" key="1">
    <source>
        <dbReference type="PROSITE-ProRule" id="PRU00654"/>
    </source>
</evidence>
<evidence type="ECO:0000269" key="2">
    <source>
    </source>
</evidence>
<evidence type="ECO:0000269" key="3">
    <source>
    </source>
</evidence>
<evidence type="ECO:0000269" key="4">
    <source>
    </source>
</evidence>
<evidence type="ECO:0000269" key="5">
    <source>
    </source>
</evidence>
<evidence type="ECO:0000269" key="6">
    <source>
    </source>
</evidence>
<evidence type="ECO:0000305" key="7"/>
<evidence type="ECO:0000305" key="8">
    <source>
    </source>
</evidence>
<evidence type="ECO:0000305" key="9">
    <source>
    </source>
</evidence>
<evidence type="ECO:0007744" key="10">
    <source>
        <dbReference type="PDB" id="2HJ3"/>
    </source>
</evidence>
<evidence type="ECO:0007829" key="11">
    <source>
        <dbReference type="PDB" id="2HJ3"/>
    </source>
</evidence>